<gene>
    <name evidence="16" type="primary">cydC</name>
    <name type="synonym">mdrA</name>
    <name type="synonym">mdrH</name>
    <name evidence="17" type="synonym">surB</name>
    <name type="ordered locus">b0886</name>
    <name type="ordered locus">JW0869</name>
</gene>
<name>CYDC_ECOLI</name>
<dbReference type="EC" id="7.4.2.-" evidence="5 8"/>
<dbReference type="EMBL" id="L10383">
    <property type="protein sequence ID" value="AAA03230.1"/>
    <property type="molecule type" value="Unassigned_DNA"/>
</dbReference>
<dbReference type="EMBL" id="L25859">
    <property type="protein sequence ID" value="AAC36864.1"/>
    <property type="molecule type" value="Unassigned_DNA"/>
</dbReference>
<dbReference type="EMBL" id="U00096">
    <property type="protein sequence ID" value="AAC73972.1"/>
    <property type="molecule type" value="Genomic_DNA"/>
</dbReference>
<dbReference type="EMBL" id="AP009048">
    <property type="protein sequence ID" value="BAA35611.1"/>
    <property type="molecule type" value="Genomic_DNA"/>
</dbReference>
<dbReference type="EMBL" id="M63145">
    <property type="protein sequence ID" value="AAC36909.1"/>
    <property type="molecule type" value="Genomic_DNA"/>
</dbReference>
<dbReference type="EMBL" id="L21749">
    <property type="protein sequence ID" value="AAA66172.1"/>
    <property type="molecule type" value="Genomic_DNA"/>
</dbReference>
<dbReference type="PIR" id="B36888">
    <property type="entry name" value="B36888"/>
</dbReference>
<dbReference type="RefSeq" id="NP_415406.1">
    <property type="nucleotide sequence ID" value="NC_000913.3"/>
</dbReference>
<dbReference type="RefSeq" id="WP_001202177.1">
    <property type="nucleotide sequence ID" value="NZ_LN832404.1"/>
</dbReference>
<dbReference type="PDB" id="7ZD5">
    <property type="method" value="EM"/>
    <property type="resolution" value="3.17 A"/>
    <property type="chains" value="C=1-573"/>
</dbReference>
<dbReference type="PDB" id="7ZDA">
    <property type="method" value="EM"/>
    <property type="resolution" value="3.17 A"/>
    <property type="chains" value="C=1-573"/>
</dbReference>
<dbReference type="PDB" id="7ZDB">
    <property type="method" value="EM"/>
    <property type="resolution" value="3.35 A"/>
    <property type="chains" value="C=1-573"/>
</dbReference>
<dbReference type="PDB" id="7ZDC">
    <property type="method" value="EM"/>
    <property type="resolution" value="3.13 A"/>
    <property type="chains" value="C=1-573"/>
</dbReference>
<dbReference type="PDB" id="7ZDE">
    <property type="method" value="EM"/>
    <property type="resolution" value="3.17 A"/>
    <property type="chains" value="C=1-573"/>
</dbReference>
<dbReference type="PDB" id="7ZDF">
    <property type="method" value="EM"/>
    <property type="resolution" value="2.94 A"/>
    <property type="chains" value="C=1-573"/>
</dbReference>
<dbReference type="PDB" id="7ZDG">
    <property type="method" value="EM"/>
    <property type="resolution" value="2.77 A"/>
    <property type="chains" value="C=1-573"/>
</dbReference>
<dbReference type="PDB" id="7ZDK">
    <property type="method" value="EM"/>
    <property type="resolution" value="3.01 A"/>
    <property type="chains" value="C=1-573"/>
</dbReference>
<dbReference type="PDB" id="7ZDL">
    <property type="method" value="EM"/>
    <property type="resolution" value="3.35 A"/>
    <property type="chains" value="C=1-573"/>
</dbReference>
<dbReference type="PDB" id="7ZDR">
    <property type="method" value="EM"/>
    <property type="resolution" value="3.05 A"/>
    <property type="chains" value="C=1-573"/>
</dbReference>
<dbReference type="PDB" id="7ZDS">
    <property type="method" value="EM"/>
    <property type="resolution" value="3.26 A"/>
    <property type="chains" value="C=1-573"/>
</dbReference>
<dbReference type="PDB" id="7ZDT">
    <property type="method" value="EM"/>
    <property type="resolution" value="2.71 A"/>
    <property type="chains" value="C=1-573"/>
</dbReference>
<dbReference type="PDB" id="7ZDU">
    <property type="method" value="EM"/>
    <property type="resolution" value="2.98 A"/>
    <property type="chains" value="C=1-573"/>
</dbReference>
<dbReference type="PDB" id="7ZDV">
    <property type="method" value="EM"/>
    <property type="resolution" value="3.05 A"/>
    <property type="chains" value="C=1-573"/>
</dbReference>
<dbReference type="PDB" id="7ZDW">
    <property type="method" value="EM"/>
    <property type="resolution" value="3.35 A"/>
    <property type="chains" value="C=1-573"/>
</dbReference>
<dbReference type="PDB" id="7ZE5">
    <property type="method" value="EM"/>
    <property type="resolution" value="2.94 A"/>
    <property type="chains" value="C=1-573"/>
</dbReference>
<dbReference type="PDB" id="7ZEC">
    <property type="method" value="EM"/>
    <property type="resolution" value="3.05 A"/>
    <property type="chains" value="C=1-573"/>
</dbReference>
<dbReference type="PDB" id="8IPS">
    <property type="method" value="EM"/>
    <property type="resolution" value="3.60 A"/>
    <property type="chains" value="A=1-573"/>
</dbReference>
<dbReference type="PDB" id="8IPT">
    <property type="method" value="EM"/>
    <property type="resolution" value="3.50 A"/>
    <property type="chains" value="C/D=1-573"/>
</dbReference>
<dbReference type="PDBsum" id="7ZD5"/>
<dbReference type="PDBsum" id="7ZDA"/>
<dbReference type="PDBsum" id="7ZDB"/>
<dbReference type="PDBsum" id="7ZDC"/>
<dbReference type="PDBsum" id="7ZDE"/>
<dbReference type="PDBsum" id="7ZDF"/>
<dbReference type="PDBsum" id="7ZDG"/>
<dbReference type="PDBsum" id="7ZDK"/>
<dbReference type="PDBsum" id="7ZDL"/>
<dbReference type="PDBsum" id="7ZDR"/>
<dbReference type="PDBsum" id="7ZDS"/>
<dbReference type="PDBsum" id="7ZDT"/>
<dbReference type="PDBsum" id="7ZDU"/>
<dbReference type="PDBsum" id="7ZDV"/>
<dbReference type="PDBsum" id="7ZDW"/>
<dbReference type="PDBsum" id="7ZE5"/>
<dbReference type="PDBsum" id="7ZEC"/>
<dbReference type="PDBsum" id="8IPS"/>
<dbReference type="PDBsum" id="8IPT"/>
<dbReference type="EMDB" id="EMD-14636"/>
<dbReference type="EMDB" id="EMD-14638"/>
<dbReference type="EMDB" id="EMD-14639"/>
<dbReference type="EMDB" id="EMD-14640"/>
<dbReference type="EMDB" id="EMD-14641"/>
<dbReference type="EMDB" id="EMD-14642"/>
<dbReference type="EMDB" id="EMD-14643"/>
<dbReference type="EMDB" id="EMD-14644"/>
<dbReference type="EMDB" id="EMD-14645"/>
<dbReference type="EMDB" id="EMD-14646"/>
<dbReference type="EMDB" id="EMD-14647"/>
<dbReference type="EMDB" id="EMD-14649"/>
<dbReference type="EMDB" id="EMD-14652"/>
<dbReference type="EMDB" id="EMD-14653"/>
<dbReference type="EMDB" id="EMD-14654"/>
<dbReference type="EMDB" id="EMD-14655"/>
<dbReference type="EMDB" id="EMD-14656"/>
<dbReference type="EMDB" id="EMD-14657"/>
<dbReference type="EMDB" id="EMD-14659"/>
<dbReference type="EMDB" id="EMD-14660"/>
<dbReference type="EMDB" id="EMD-14662"/>
<dbReference type="EMDB" id="EMD-14663"/>
<dbReference type="EMDB" id="EMD-14665"/>
<dbReference type="EMDB" id="EMD-14667"/>
<dbReference type="EMDB" id="EMD-14668"/>
<dbReference type="EMDB" id="EMD-14669"/>
<dbReference type="EMDB" id="EMD-14670"/>
<dbReference type="EMDB" id="EMD-14671"/>
<dbReference type="EMDB" id="EMD-14672"/>
<dbReference type="EMDB" id="EMD-14673"/>
<dbReference type="EMDB" id="EMD-14674"/>
<dbReference type="EMDB" id="EMD-14675"/>
<dbReference type="EMDB" id="EMD-14676"/>
<dbReference type="EMDB" id="EMD-14684"/>
<dbReference type="EMDB" id="EMD-14689"/>
<dbReference type="EMDB" id="EMD-15264"/>
<dbReference type="EMDB" id="EMD-15265"/>
<dbReference type="SMR" id="P23886"/>
<dbReference type="BioGRID" id="4260004">
    <property type="interactions" value="308"/>
</dbReference>
<dbReference type="ComplexPortal" id="CPX-4601">
    <property type="entry name" value="Glutathione/cysteine ABC exporter complex"/>
</dbReference>
<dbReference type="DIP" id="DIP-9362N"/>
<dbReference type="FunCoup" id="P23886">
    <property type="interactions" value="238"/>
</dbReference>
<dbReference type="IntAct" id="P23886">
    <property type="interactions" value="6"/>
</dbReference>
<dbReference type="STRING" id="511145.b0886"/>
<dbReference type="TCDB" id="3.A.1.129.1">
    <property type="family name" value="the atp-binding cassette (abc) superfamily"/>
</dbReference>
<dbReference type="jPOST" id="P23886"/>
<dbReference type="PaxDb" id="511145-b0886"/>
<dbReference type="EnsemblBacteria" id="AAC73972">
    <property type="protein sequence ID" value="AAC73972"/>
    <property type="gene ID" value="b0886"/>
</dbReference>
<dbReference type="GeneID" id="945504"/>
<dbReference type="KEGG" id="ecj:JW0869"/>
<dbReference type="KEGG" id="eco:b0886"/>
<dbReference type="KEGG" id="ecoc:C3026_05495"/>
<dbReference type="PATRIC" id="fig|1411691.4.peg.1392"/>
<dbReference type="EchoBASE" id="EB0012"/>
<dbReference type="eggNOG" id="COG4987">
    <property type="taxonomic scope" value="Bacteria"/>
</dbReference>
<dbReference type="HOGENOM" id="CLU_000604_84_9_6"/>
<dbReference type="InParanoid" id="P23886"/>
<dbReference type="OMA" id="FLHIGQV"/>
<dbReference type="OrthoDB" id="9802264at2"/>
<dbReference type="PhylomeDB" id="P23886"/>
<dbReference type="BioCyc" id="EcoCyc:CYDC-MONOMER"/>
<dbReference type="BioCyc" id="MetaCyc:CYDC-MONOMER"/>
<dbReference type="PRO" id="PR:P23886"/>
<dbReference type="Proteomes" id="UP000000625">
    <property type="component" value="Chromosome"/>
</dbReference>
<dbReference type="GO" id="GO:0043190">
    <property type="term" value="C:ATP-binding cassette (ABC) transporter complex"/>
    <property type="evidence" value="ECO:0000303"/>
    <property type="project" value="ComplexPortal"/>
</dbReference>
<dbReference type="GO" id="GO:0055051">
    <property type="term" value="C:ATP-binding cassette (ABC) transporter complex, integrated substrate binding"/>
    <property type="evidence" value="ECO:0000314"/>
    <property type="project" value="EcoCyc"/>
</dbReference>
<dbReference type="GO" id="GO:0005886">
    <property type="term" value="C:plasma membrane"/>
    <property type="evidence" value="ECO:0000314"/>
    <property type="project" value="EcoCyc"/>
</dbReference>
<dbReference type="GO" id="GO:0015439">
    <property type="term" value="F:ABC-type heme transporter activity"/>
    <property type="evidence" value="ECO:0000314"/>
    <property type="project" value="EcoCyc"/>
</dbReference>
<dbReference type="GO" id="GO:0005524">
    <property type="term" value="F:ATP binding"/>
    <property type="evidence" value="ECO:0007669"/>
    <property type="project" value="UniProtKB-KW"/>
</dbReference>
<dbReference type="GO" id="GO:0016887">
    <property type="term" value="F:ATP hydrolysis activity"/>
    <property type="evidence" value="ECO:0007669"/>
    <property type="project" value="InterPro"/>
</dbReference>
<dbReference type="GO" id="GO:0042626">
    <property type="term" value="F:ATPase-coupled transmembrane transporter activity"/>
    <property type="evidence" value="ECO:0000318"/>
    <property type="project" value="GO_Central"/>
</dbReference>
<dbReference type="GO" id="GO:0045454">
    <property type="term" value="P:cell redox homeostasis"/>
    <property type="evidence" value="ECO:0000315"/>
    <property type="project" value="EcoCyc"/>
</dbReference>
<dbReference type="GO" id="GO:0033228">
    <property type="term" value="P:cysteine export across plasma membrane"/>
    <property type="evidence" value="ECO:0000314"/>
    <property type="project" value="EcoCyc"/>
</dbReference>
<dbReference type="GO" id="GO:1903605">
    <property type="term" value="P:cytochrome biosynthetic process"/>
    <property type="evidence" value="ECO:0000315"/>
    <property type="project" value="EcoCyc"/>
</dbReference>
<dbReference type="GO" id="GO:0034775">
    <property type="term" value="P:glutathione transmembrane transport"/>
    <property type="evidence" value="ECO:0000314"/>
    <property type="project" value="EcoCyc"/>
</dbReference>
<dbReference type="GO" id="GO:0035351">
    <property type="term" value="P:heme transmembrane transport"/>
    <property type="evidence" value="ECO:0000314"/>
    <property type="project" value="EcoCyc"/>
</dbReference>
<dbReference type="CDD" id="cd18585">
    <property type="entry name" value="ABC_6TM_CydC"/>
    <property type="match status" value="1"/>
</dbReference>
<dbReference type="CDD" id="cd03247">
    <property type="entry name" value="ABCC_cytochrome_bd"/>
    <property type="match status" value="1"/>
</dbReference>
<dbReference type="FunFam" id="1.20.1560.10:FF:000060">
    <property type="entry name" value="Cysteine/glutathione ABC transporter ATP-binding protein/permease CydC"/>
    <property type="match status" value="1"/>
</dbReference>
<dbReference type="FunFam" id="3.40.50.300:FF:001297">
    <property type="entry name" value="Cysteine/glutathione ABC transporter ATP-binding protein/permease CydC"/>
    <property type="match status" value="1"/>
</dbReference>
<dbReference type="Gene3D" id="1.20.1560.10">
    <property type="entry name" value="ABC transporter type 1, transmembrane domain"/>
    <property type="match status" value="1"/>
</dbReference>
<dbReference type="Gene3D" id="3.40.50.300">
    <property type="entry name" value="P-loop containing nucleotide triphosphate hydrolases"/>
    <property type="match status" value="1"/>
</dbReference>
<dbReference type="InterPro" id="IPR003593">
    <property type="entry name" value="AAA+_ATPase"/>
</dbReference>
<dbReference type="InterPro" id="IPR011527">
    <property type="entry name" value="ABC1_TM_dom"/>
</dbReference>
<dbReference type="InterPro" id="IPR036640">
    <property type="entry name" value="ABC1_TM_sf"/>
</dbReference>
<dbReference type="InterPro" id="IPR014223">
    <property type="entry name" value="ABC_CydC/D"/>
</dbReference>
<dbReference type="InterPro" id="IPR003439">
    <property type="entry name" value="ABC_transporter-like_ATP-bd"/>
</dbReference>
<dbReference type="InterPro" id="IPR017871">
    <property type="entry name" value="ABC_transporter-like_CS"/>
</dbReference>
<dbReference type="InterPro" id="IPR027417">
    <property type="entry name" value="P-loop_NTPase"/>
</dbReference>
<dbReference type="InterPro" id="IPR039421">
    <property type="entry name" value="Type_1_exporter"/>
</dbReference>
<dbReference type="NCBIfam" id="TIGR02868">
    <property type="entry name" value="CydC"/>
    <property type="match status" value="1"/>
</dbReference>
<dbReference type="NCBIfam" id="NF008364">
    <property type="entry name" value="PRK11160.1"/>
    <property type="match status" value="1"/>
</dbReference>
<dbReference type="PANTHER" id="PTHR43394:SF1">
    <property type="entry name" value="ATP-BINDING CASSETTE SUB-FAMILY B MEMBER 10, MITOCHONDRIAL"/>
    <property type="match status" value="1"/>
</dbReference>
<dbReference type="PANTHER" id="PTHR43394">
    <property type="entry name" value="ATP-DEPENDENT PERMEASE MDL1, MITOCHONDRIAL"/>
    <property type="match status" value="1"/>
</dbReference>
<dbReference type="Pfam" id="PF00664">
    <property type="entry name" value="ABC_membrane"/>
    <property type="match status" value="1"/>
</dbReference>
<dbReference type="Pfam" id="PF00005">
    <property type="entry name" value="ABC_tran"/>
    <property type="match status" value="1"/>
</dbReference>
<dbReference type="SMART" id="SM00382">
    <property type="entry name" value="AAA"/>
    <property type="match status" value="1"/>
</dbReference>
<dbReference type="SUPFAM" id="SSF90123">
    <property type="entry name" value="ABC transporter transmembrane region"/>
    <property type="match status" value="1"/>
</dbReference>
<dbReference type="SUPFAM" id="SSF52540">
    <property type="entry name" value="P-loop containing nucleoside triphosphate hydrolases"/>
    <property type="match status" value="1"/>
</dbReference>
<dbReference type="PROSITE" id="PS50929">
    <property type="entry name" value="ABC_TM1F"/>
    <property type="match status" value="1"/>
</dbReference>
<dbReference type="PROSITE" id="PS00211">
    <property type="entry name" value="ABC_TRANSPORTER_1"/>
    <property type="match status" value="1"/>
</dbReference>
<dbReference type="PROSITE" id="PS50893">
    <property type="entry name" value="ABC_TRANSPORTER_2"/>
    <property type="match status" value="1"/>
</dbReference>
<keyword id="KW-0002">3D-structure</keyword>
<keyword id="KW-0029">Amino-acid transport</keyword>
<keyword id="KW-0067">ATP-binding</keyword>
<keyword id="KW-0997">Cell inner membrane</keyword>
<keyword id="KW-1003">Cell membrane</keyword>
<keyword id="KW-0472">Membrane</keyword>
<keyword id="KW-0547">Nucleotide-binding</keyword>
<keyword id="KW-1185">Reference proteome</keyword>
<keyword id="KW-1278">Translocase</keyword>
<keyword id="KW-0812">Transmembrane</keyword>
<keyword id="KW-1133">Transmembrane helix</keyword>
<keyword id="KW-0813">Transport</keyword>
<organism>
    <name type="scientific">Escherichia coli (strain K12)</name>
    <dbReference type="NCBI Taxonomy" id="83333"/>
    <lineage>
        <taxon>Bacteria</taxon>
        <taxon>Pseudomonadati</taxon>
        <taxon>Pseudomonadota</taxon>
        <taxon>Gammaproteobacteria</taxon>
        <taxon>Enterobacterales</taxon>
        <taxon>Enterobacteriaceae</taxon>
        <taxon>Escherichia</taxon>
    </lineage>
</organism>
<protein>
    <recommendedName>
        <fullName evidence="18">Glutathione/L-cysteine transport system ATP-binding/permease protein CydC</fullName>
        <ecNumber evidence="5 8">7.4.2.-</ecNumber>
    </recommendedName>
</protein>
<feature type="chain" id="PRO_0000092241" description="Glutathione/L-cysteine transport system ATP-binding/permease protein CydC">
    <location>
        <begin position="1"/>
        <end position="573"/>
    </location>
</feature>
<feature type="topological domain" description="Cytoplasmic" evidence="6">
    <location>
        <begin position="1"/>
        <end position="15"/>
    </location>
</feature>
<feature type="transmembrane region" description="Helical" evidence="1">
    <location>
        <begin position="16"/>
        <end position="36"/>
    </location>
</feature>
<feature type="transmembrane region" description="Helical" evidence="1">
    <location>
        <begin position="37"/>
        <end position="57"/>
    </location>
</feature>
<feature type="topological domain" description="Cytoplasmic" evidence="6">
    <location>
        <begin position="58"/>
        <end position="136"/>
    </location>
</feature>
<feature type="transmembrane region" description="Helical" evidence="1">
    <location>
        <begin position="137"/>
        <end position="157"/>
    </location>
</feature>
<feature type="topological domain" description="Periplasmic" evidence="6">
    <location>
        <begin position="158"/>
        <end position="161"/>
    </location>
</feature>
<feature type="transmembrane region" description="Helical" evidence="1">
    <location>
        <begin position="162"/>
        <end position="182"/>
    </location>
</feature>
<feature type="topological domain" description="Cytoplasmic" evidence="6">
    <location>
        <begin position="183"/>
        <end position="249"/>
    </location>
</feature>
<feature type="transmembrane region" description="Helical" evidence="1">
    <location>
        <begin position="250"/>
        <end position="270"/>
    </location>
</feature>
<feature type="topological domain" description="Periplasmic" evidence="6">
    <location>
        <begin position="271"/>
        <end position="276"/>
    </location>
</feature>
<feature type="transmembrane region" description="Helical" evidence="1">
    <location>
        <begin position="277"/>
        <end position="297"/>
    </location>
</feature>
<feature type="topological domain" description="Cytoplasmic" evidence="6">
    <location>
        <begin position="298"/>
        <end position="573"/>
    </location>
</feature>
<feature type="domain" description="ABC transmembrane type-1" evidence="3">
    <location>
        <begin position="20"/>
        <end position="306"/>
    </location>
</feature>
<feature type="domain" description="ABC transporter" evidence="2">
    <location>
        <begin position="339"/>
        <end position="572"/>
    </location>
</feature>
<feature type="binding site" evidence="2">
    <location>
        <begin position="373"/>
        <end position="380"/>
    </location>
    <ligand>
        <name>ATP</name>
        <dbReference type="ChEBI" id="CHEBI:30616"/>
    </ligand>
</feature>
<feature type="sequence conflict" description="In Ref. 2; AAC36864." evidence="18" ref="2">
    <original>A</original>
    <variation>R</variation>
    <location>
        <position position="289"/>
    </location>
</feature>
<feature type="sequence conflict" description="In Ref. 2; AAC36864." evidence="18" ref="2">
    <original>LR</original>
    <variation>PG</variation>
    <location>
        <begin position="480"/>
        <end position="481"/>
    </location>
</feature>
<feature type="sequence conflict" description="In Ref. 7; AAC36909." evidence="18" ref="7">
    <original>G</original>
    <variation>A</variation>
    <location>
        <position position="504"/>
    </location>
</feature>
<feature type="helix" evidence="26">
    <location>
        <begin position="2"/>
        <end position="4"/>
    </location>
</feature>
<feature type="helix" evidence="26">
    <location>
        <begin position="5"/>
        <end position="8"/>
    </location>
</feature>
<feature type="helix" evidence="26">
    <location>
        <begin position="9"/>
        <end position="11"/>
    </location>
</feature>
<feature type="turn" evidence="25">
    <location>
        <begin position="12"/>
        <end position="14"/>
    </location>
</feature>
<feature type="helix" evidence="26">
    <location>
        <begin position="15"/>
        <end position="49"/>
    </location>
</feature>
<feature type="turn" evidence="26">
    <location>
        <begin position="50"/>
        <end position="56"/>
    </location>
</feature>
<feature type="helix" evidence="26">
    <location>
        <begin position="60"/>
        <end position="100"/>
    </location>
</feature>
<feature type="helix" evidence="26">
    <location>
        <begin position="104"/>
        <end position="106"/>
    </location>
</feature>
<feature type="turn" evidence="26">
    <location>
        <begin position="107"/>
        <end position="110"/>
    </location>
</feature>
<feature type="helix" evidence="26">
    <location>
        <begin position="111"/>
        <end position="113"/>
    </location>
</feature>
<feature type="helix" evidence="26">
    <location>
        <begin position="116"/>
        <end position="129"/>
    </location>
</feature>
<feature type="helix" evidence="26">
    <location>
        <begin position="131"/>
        <end position="135"/>
    </location>
</feature>
<feature type="helix" evidence="26">
    <location>
        <begin position="138"/>
        <end position="158"/>
    </location>
</feature>
<feature type="helix" evidence="26">
    <location>
        <begin position="160"/>
        <end position="208"/>
    </location>
</feature>
<feature type="helix" evidence="26">
    <location>
        <begin position="210"/>
        <end position="215"/>
    </location>
</feature>
<feature type="helix" evidence="26">
    <location>
        <begin position="219"/>
        <end position="268"/>
    </location>
</feature>
<feature type="strand" evidence="26">
    <location>
        <begin position="270"/>
        <end position="272"/>
    </location>
</feature>
<feature type="strand" evidence="23">
    <location>
        <begin position="273"/>
        <end position="275"/>
    </location>
</feature>
<feature type="helix" evidence="26">
    <location>
        <begin position="278"/>
        <end position="290"/>
    </location>
</feature>
<feature type="turn" evidence="26">
    <location>
        <begin position="291"/>
        <end position="294"/>
    </location>
</feature>
<feature type="helix" evidence="26">
    <location>
        <begin position="295"/>
        <end position="302"/>
    </location>
</feature>
<feature type="helix" evidence="26">
    <location>
        <begin position="304"/>
        <end position="318"/>
    </location>
</feature>
<feature type="strand" evidence="26">
    <location>
        <begin position="339"/>
        <end position="346"/>
    </location>
</feature>
<feature type="turn" evidence="24">
    <location>
        <begin position="351"/>
        <end position="353"/>
    </location>
</feature>
<feature type="strand" evidence="26">
    <location>
        <begin position="355"/>
        <end position="363"/>
    </location>
</feature>
<feature type="strand" evidence="26">
    <location>
        <begin position="368"/>
        <end position="373"/>
    </location>
</feature>
<feature type="turn" evidence="22">
    <location>
        <begin position="375"/>
        <end position="377"/>
    </location>
</feature>
<feature type="helix" evidence="26">
    <location>
        <begin position="379"/>
        <end position="385"/>
    </location>
</feature>
<feature type="turn" evidence="26">
    <location>
        <begin position="386"/>
        <end position="388"/>
    </location>
</feature>
<feature type="strand" evidence="26">
    <location>
        <begin position="396"/>
        <end position="399"/>
    </location>
</feature>
<feature type="helix" evidence="26">
    <location>
        <begin position="404"/>
        <end position="406"/>
    </location>
</feature>
<feature type="helix" evidence="26">
    <location>
        <begin position="409"/>
        <end position="413"/>
    </location>
</feature>
<feature type="strand" evidence="26">
    <location>
        <begin position="415"/>
        <end position="419"/>
    </location>
</feature>
<feature type="strand" evidence="26">
    <location>
        <begin position="427"/>
        <end position="429"/>
    </location>
</feature>
<feature type="helix" evidence="26">
    <location>
        <begin position="430"/>
        <end position="434"/>
    </location>
</feature>
<feature type="strand" evidence="27">
    <location>
        <begin position="435"/>
        <end position="437"/>
    </location>
</feature>
<feature type="strand" evidence="23">
    <location>
        <begin position="438"/>
        <end position="440"/>
    </location>
</feature>
<feature type="helix" evidence="26">
    <location>
        <begin position="443"/>
        <end position="453"/>
    </location>
</feature>
<feature type="helix" evidence="26">
    <location>
        <begin position="456"/>
        <end position="459"/>
    </location>
</feature>
<feature type="strand" evidence="22">
    <location>
        <begin position="460"/>
        <end position="462"/>
    </location>
</feature>
<feature type="helix" evidence="26">
    <location>
        <begin position="463"/>
        <end position="465"/>
    </location>
</feature>
<feature type="strand" evidence="26">
    <location>
        <begin position="466"/>
        <end position="469"/>
    </location>
</feature>
<feature type="helix" evidence="26">
    <location>
        <begin position="477"/>
        <end position="491"/>
    </location>
</feature>
<feature type="strand" evidence="26">
    <location>
        <begin position="494"/>
        <end position="502"/>
    </location>
</feature>
<feature type="helix" evidence="26">
    <location>
        <begin position="507"/>
        <end position="520"/>
    </location>
</feature>
<feature type="turn" evidence="26">
    <location>
        <begin position="521"/>
        <end position="523"/>
    </location>
</feature>
<feature type="strand" evidence="26">
    <location>
        <begin position="524"/>
        <end position="529"/>
    </location>
</feature>
<feature type="strand" evidence="26">
    <location>
        <begin position="537"/>
        <end position="554"/>
    </location>
</feature>
<feature type="helix" evidence="26">
    <location>
        <begin position="556"/>
        <end position="562"/>
    </location>
</feature>
<feature type="helix" evidence="26">
    <location>
        <begin position="565"/>
        <end position="570"/>
    </location>
</feature>
<comment type="function">
    <text evidence="4 5 6 8 9 10 12 13 19 20 21">Part of the ABC transporter complex CydDC that exports the reduced low-molecular-weight thiols cysteine and glutathione to the periplasm (PubMed:12393891, PubMed:16040611). Export of these thiol-containing redox-active molecules may be crucial for redox homeostasis in the periplasm, permitting correct assembly of various respiratory complexes and formation of correct disulfide bonds in periplasmic and secreted proteins (Probable). CydC contains transmembrane domains (TMD), which form a pore in the inner membrane, and an ATP-binding domain (NBD), which is responsible for energy generation (PubMed:24958725). Required for the assembly of functional cytochrome bd-type quinol oxidases and periplasmic c-type cytochromes (PubMed:15470119, PubMed:3032907, PubMed:7934832, PubMed:8181727). Overexpression of CydDC under anaerobic conditions also results in the formation of a heme biosynthesis-derived pigment, P-574 (PubMed:12375104). CydDC binds heme b, but heme is probably not transported by the complex and instead has a role in regulating ATPase activity (PubMed:24958725).</text>
</comment>
<comment type="function">
    <text evidence="11">Conversely, a more recent study suggests an alternative function of CydDC: authors suggest that CydDC does not mediate the export of L-cysteine but rather reduces cytoplasmic L-cystine to L-cysteine (PubMed:32900959). The principle function of CydDC would be to maintain the reduced state of cytoplasmic L-cysteine, thereby providing an important connection between sulfur metabolism, oxidative stress and resistance to antibiotics (PubMed:32900959).</text>
</comment>
<comment type="catalytic activity">
    <reaction evidence="5">
        <text>L-cysteine(in) + ATP + H2O = L-cysteine(out) + ADP + phosphate + H(+)</text>
        <dbReference type="Rhea" id="RHEA:29783"/>
        <dbReference type="ChEBI" id="CHEBI:15377"/>
        <dbReference type="ChEBI" id="CHEBI:15378"/>
        <dbReference type="ChEBI" id="CHEBI:30616"/>
        <dbReference type="ChEBI" id="CHEBI:35235"/>
        <dbReference type="ChEBI" id="CHEBI:43474"/>
        <dbReference type="ChEBI" id="CHEBI:456216"/>
    </reaction>
    <physiologicalReaction direction="left-to-right" evidence="5">
        <dbReference type="Rhea" id="RHEA:29784"/>
    </physiologicalReaction>
</comment>
<comment type="catalytic activity">
    <reaction evidence="8">
        <text>glutathione(in) + ATP + H2O = glutathione(out) + ADP + phosphate + H(+)</text>
        <dbReference type="Rhea" id="RHEA:29787"/>
        <dbReference type="ChEBI" id="CHEBI:15377"/>
        <dbReference type="ChEBI" id="CHEBI:15378"/>
        <dbReference type="ChEBI" id="CHEBI:30616"/>
        <dbReference type="ChEBI" id="CHEBI:43474"/>
        <dbReference type="ChEBI" id="CHEBI:57925"/>
        <dbReference type="ChEBI" id="CHEBI:456216"/>
    </reaction>
    <physiologicalReaction direction="left-to-right" evidence="8">
        <dbReference type="Rhea" id="RHEA:29788"/>
    </physiologicalReaction>
</comment>
<comment type="activity regulation">
    <text evidence="8 9">ATPase activity is stimulated by various thiol compounds (PubMed:24958725). The presence of heme leads to a further enhancement of thiol-stimulated ATPase activity, although a large excess of heme inhibits activity (PubMed:24958725). Glutathione transport is inhibited by sodium orthovanadate, an inhibitor of ABC-type transport systems, but not by the proton ionophore carbonyl cyanide m-chlorophenylhydrazone (CCCP) (PubMed:16040611).</text>
</comment>
<comment type="subunit">
    <text evidence="6 9">Forms a heterodimer with CydD.</text>
</comment>
<comment type="subcellular location">
    <subcellularLocation>
        <location evidence="6 7">Cell inner membrane</location>
        <topology evidence="6">Multi-pass membrane protein</topology>
    </subcellularLocation>
</comment>
<comment type="induction">
    <text evidence="15">Part of the cydDC operon, which is highly expressed under aerobic growth conditions and during anaerobic growth with alternative electron acceptors such as nitrite or nitrate (PubMed:9335308). Induction by nitrate and nitrite is dependent on NarL and Fnr (PubMed:9335308).</text>
</comment>
<comment type="domain">
    <text evidence="18">In CydC the ATP-binding domain (NBD) and the transmembrane domain (TMD) are fused.</text>
</comment>
<comment type="disruption phenotype">
    <text evidence="10 12 14">Mutant lacks functional cytochrome bd complex (PubMed:3032907, PubMed:7934832, PubMed:8276245). Mutant grows normally and remains viable during stationary phase but is unable to exit stationary phase and resume aerobic growth at high temperature (PubMed:8276245).</text>
</comment>
<comment type="miscellaneous">
    <text evidence="5">Overexpression of CydDC confers resistance to exogenous cysteine toxicity.</text>
</comment>
<comment type="similarity">
    <text evidence="18">Belongs to the ABC transporter superfamily. Cysteine exporter (TC 3.A.1.129.1) family.</text>
</comment>
<proteinExistence type="evidence at protein level"/>
<reference key="1">
    <citation type="journal article" date="1993" name="J. Bacteriol.">
        <title>The N-end rule in Escherichia coli: cloning and analysis of the leucyl, phenylalanyl-tRNA-protein transferase gene aat.</title>
        <authorList>
            <person name="Shrader T.E."/>
            <person name="Tobias J.W."/>
            <person name="Varshavsky A."/>
        </authorList>
    </citation>
    <scope>NUCLEOTIDE SEQUENCE [GENOMIC DNA]</scope>
    <source>
        <strain>K12 / MC1061 / ATCC 53338 / DSM 7140</strain>
    </source>
</reference>
<reference key="2">
    <citation type="journal article" date="1993" name="Genes Dev.">
        <title>Isolation and characterization of an Escherichia coli mutant defective in resuming growth after starvation.</title>
        <authorList>
            <person name="Siegele D.D."/>
            <person name="Kolter R."/>
        </authorList>
    </citation>
    <scope>NUCLEOTIDE SEQUENCE [GENOMIC DNA]</scope>
    <scope>DISRUPTION PHENOTYPE</scope>
</reference>
<reference key="3">
    <citation type="journal article" date="1996" name="DNA Res.">
        <title>A 718-kb DNA sequence of the Escherichia coli K-12 genome corresponding to the 12.7-28.0 min region on the linkage map.</title>
        <authorList>
            <person name="Oshima T."/>
            <person name="Aiba H."/>
            <person name="Baba T."/>
            <person name="Fujita K."/>
            <person name="Hayashi K."/>
            <person name="Honjo A."/>
            <person name="Ikemoto K."/>
            <person name="Inada T."/>
            <person name="Itoh T."/>
            <person name="Kajihara M."/>
            <person name="Kanai K."/>
            <person name="Kashimoto K."/>
            <person name="Kimura S."/>
            <person name="Kitagawa M."/>
            <person name="Makino K."/>
            <person name="Masuda S."/>
            <person name="Miki T."/>
            <person name="Mizobuchi K."/>
            <person name="Mori H."/>
            <person name="Motomura K."/>
            <person name="Nakamura Y."/>
            <person name="Nashimoto H."/>
            <person name="Nishio Y."/>
            <person name="Saito N."/>
            <person name="Sampei G."/>
            <person name="Seki Y."/>
            <person name="Tagami H."/>
            <person name="Takemoto K."/>
            <person name="Wada C."/>
            <person name="Yamamoto Y."/>
            <person name="Yano M."/>
            <person name="Horiuchi T."/>
        </authorList>
    </citation>
    <scope>NUCLEOTIDE SEQUENCE [LARGE SCALE GENOMIC DNA]</scope>
    <source>
        <strain>K12 / W3110 / ATCC 27325 / DSM 5911</strain>
    </source>
</reference>
<reference key="4">
    <citation type="journal article" date="1997" name="Science">
        <title>The complete genome sequence of Escherichia coli K-12.</title>
        <authorList>
            <person name="Blattner F.R."/>
            <person name="Plunkett G. III"/>
            <person name="Bloch C.A."/>
            <person name="Perna N.T."/>
            <person name="Burland V."/>
            <person name="Riley M."/>
            <person name="Collado-Vides J."/>
            <person name="Glasner J.D."/>
            <person name="Rode C.K."/>
            <person name="Mayhew G.F."/>
            <person name="Gregor J."/>
            <person name="Davis N.W."/>
            <person name="Kirkpatrick H.A."/>
            <person name="Goeden M.A."/>
            <person name="Rose D.J."/>
            <person name="Mau B."/>
            <person name="Shao Y."/>
        </authorList>
    </citation>
    <scope>NUCLEOTIDE SEQUENCE [LARGE SCALE GENOMIC DNA]</scope>
    <source>
        <strain>K12 / MG1655 / ATCC 47076</strain>
    </source>
</reference>
<reference key="5">
    <citation type="journal article" date="2006" name="Mol. Syst. Biol.">
        <title>Highly accurate genome sequences of Escherichia coli K-12 strains MG1655 and W3110.</title>
        <authorList>
            <person name="Hayashi K."/>
            <person name="Morooka N."/>
            <person name="Yamamoto Y."/>
            <person name="Fujita K."/>
            <person name="Isono K."/>
            <person name="Choi S."/>
            <person name="Ohtsubo E."/>
            <person name="Baba T."/>
            <person name="Wanner B.L."/>
            <person name="Mori H."/>
            <person name="Horiuchi T."/>
        </authorList>
    </citation>
    <scope>NUCLEOTIDE SEQUENCE [LARGE SCALE GENOMIC DNA]</scope>
    <source>
        <strain>K12 / W3110 / ATCC 27325 / DSM 5911</strain>
    </source>
</reference>
<reference key="6">
    <citation type="journal article" date="1993" name="Mol. Microbiol.">
        <title>Cytochrome bd biosynthesis in Escherichia coli: the sequences of the cydC and cydD genes suggest that they encode the components of an ABC membrane transporter.</title>
        <authorList>
            <person name="Poole R.K."/>
            <person name="Hatch L."/>
            <person name="Cleeter M.W.J."/>
            <person name="Gibson F."/>
            <person name="Cox G.B."/>
            <person name="Wu G."/>
        </authorList>
    </citation>
    <scope>NUCLEOTIDE SEQUENCE [GENOMIC DNA] OF 1-453</scope>
    <scope>FUNCTION IN CYTOCHROME BD FORMATION</scope>
    <scope>DISRUPTION PHENOTYPE</scope>
</reference>
<reference key="7">
    <citation type="journal article" date="1991" name="J. Biol. Chem.">
        <title>Structure and expression of the infA operon encoding translational initiation factor IF1. Transcriptional control by growth rate.</title>
        <authorList>
            <person name="Cummings H.S."/>
            <person name="Sands J.F."/>
            <person name="Foreman P.C."/>
            <person name="Fraser J."/>
            <person name="Hershey J.W.B."/>
        </authorList>
    </citation>
    <scope>NUCLEOTIDE SEQUENCE [GENOMIC DNA] OF 449-504</scope>
</reference>
<reference key="8">
    <citation type="journal article" date="1987" name="J. Bacteriol.">
        <title>Identification of the cydC locus required for expression of the functional form of the cytochrome d terminal oxidase complex in Escherichia coli.</title>
        <authorList>
            <person name="Georgiou C.D."/>
            <person name="Fang H."/>
            <person name="Gennis R.B."/>
        </authorList>
    </citation>
    <scope>FUNCTION IN CYTOCHROME BD FORMATION</scope>
    <scope>DISRUPTION PHENOTYPE</scope>
</reference>
<reference key="9">
    <citation type="journal article" date="1994" name="FEMS Microbiol. Lett.">
        <title>The cydD gene product, component of a heterodimeric ABC transporter, is required for assembly of periplasmic cytochrome c and of cytochrome bd in Escherichia coli.</title>
        <authorList>
            <person name="Poole R.K."/>
            <person name="Gibson F."/>
            <person name="Wu G."/>
        </authorList>
    </citation>
    <scope>FUNCTION IN CYTOCHROME C FORMATION</scope>
</reference>
<reference key="10">
    <citation type="journal article" date="1997" name="J. Bacteriol.">
        <title>Transcriptional regulation of the cydDC operon, encoding a heterodimeric ABC transporter required for assembly of cytochromes c and bd in Escherichia coli K-12: regulation by oxygen and alternative electron acceptors.</title>
        <authorList>
            <person name="Cook G.M."/>
            <person name="Membrillo-Hernandez J."/>
            <person name="Poole R.K."/>
        </authorList>
    </citation>
    <scope>INDUCTION</scope>
</reference>
<reference key="11">
    <citation type="journal article" date="2002" name="Arch. Microbiol.">
        <title>A novel haem compound accumulated in Escherichia coli overexpressing the cydDC operon, encoding an ABC-type transporter required for cytochrome assembly.</title>
        <authorList>
            <person name="Cook G.M."/>
            <person name="Cruz-Ramos H."/>
            <person name="Moir A.J."/>
            <person name="Poole R.K."/>
        </authorList>
    </citation>
    <scope>FUNCTION</scope>
</reference>
<reference key="12">
    <citation type="journal article" date="2002" name="J. Biol. Chem.">
        <title>Cysteine is exported from the Escherichia coli cytoplasm by CydDC, an ATP-binding cassette-type transporter required for cytochrome assembly.</title>
        <authorList>
            <person name="Pittman M.S."/>
            <person name="Corker H."/>
            <person name="Wu G."/>
            <person name="Binet M.B."/>
            <person name="Moir A.J."/>
            <person name="Poole R.K."/>
        </authorList>
    </citation>
    <scope>FUNCTION IN CYSTEINE EXPORT</scope>
    <scope>CATALYTIC ACTIVITY</scope>
    <scope>OVEREXPRESSION</scope>
</reference>
<reference key="13">
    <citation type="journal article" date="2004" name="Microbiology">
        <title>Membrane topology and mutational analysis of Escherichia coli CydDC, an ABC-type cysteine exporter required for cytochrome assembly.</title>
        <authorList>
            <person name="Cruz-Ramos H."/>
            <person name="Cook G.M."/>
            <person name="Wu G."/>
            <person name="Cleeter M.W."/>
            <person name="Poole R.K."/>
        </authorList>
    </citation>
    <scope>FUNCTION</scope>
    <scope>SUBUNIT</scope>
    <scope>SUBCELLULAR LOCATION</scope>
    <scope>TOPOLOGY</scope>
    <source>
        <strain>K12</strain>
    </source>
</reference>
<reference key="14">
    <citation type="journal article" date="2005" name="J. Biol. Chem.">
        <title>A bacterial glutathione transporter (Escherichia coli CydDC) exports reductant to the periplasm.</title>
        <authorList>
            <person name="Pittman M.S."/>
            <person name="Robinson H.C."/>
            <person name="Poole R.K."/>
        </authorList>
    </citation>
    <scope>FUNCTION IN GLUTATHIONE EXPORT</scope>
    <scope>CATALYTIC ACTIVITY</scope>
    <scope>ACTIVITY REGULATION</scope>
</reference>
<reference key="15">
    <citation type="journal article" date="2005" name="Science">
        <title>Global topology analysis of the Escherichia coli inner membrane proteome.</title>
        <authorList>
            <person name="Daley D.O."/>
            <person name="Rapp M."/>
            <person name="Granseth E."/>
            <person name="Melen K."/>
            <person name="Drew D."/>
            <person name="von Heijne G."/>
        </authorList>
    </citation>
    <scope>SUBCELLULAR LOCATION</scope>
    <source>
        <strain>K12 / MG1655 / ATCC 47076</strain>
    </source>
</reference>
<reference key="16">
    <citation type="journal article" date="2014" name="J. Biol. Chem.">
        <title>Structure and function of the bacterial heterodimeric ABC transporter CydDC: stimulation of ATPase activity by thiol and heme compounds.</title>
        <authorList>
            <person name="Yamashita M."/>
            <person name="Shepherd M."/>
            <person name="Booth W.I."/>
            <person name="Xie H."/>
            <person name="Postis V."/>
            <person name="Nyathi Y."/>
            <person name="Tzokov S.B."/>
            <person name="Poole R.K."/>
            <person name="Baldwin S.A."/>
            <person name="Bullough P.A."/>
        </authorList>
    </citation>
    <scope>FUNCTION</scope>
    <scope>ATPASE ACTIVITY</scope>
    <scope>ACTIVITY REGULATION</scope>
    <scope>INTERACTION WITH CYDD AND HEME</scope>
    <scope>SUBUNIT</scope>
</reference>
<reference key="17">
    <citation type="journal article" date="2020" name="Proc. Natl. Acad. Sci. U.S.A.">
        <title>CydDC functions as a cytoplasmic cystine reductase to sensitize Escherichia coli to oxidative stress and aminoglycosides.</title>
        <authorList>
            <person name="Mironov A."/>
            <person name="Seregina T."/>
            <person name="Shatalin K."/>
            <person name="Nagornykh M."/>
            <person name="Shakulov R."/>
            <person name="Nudler E."/>
        </authorList>
    </citation>
    <scope>PROPOSED FUNCTION AS A CYTOPLASMIC CYSTINE REDUCTASE</scope>
</reference>
<reference key="18">
    <citation type="journal article" date="2019" name="Res. Microbiol.">
        <title>The CydDC family of transporters.</title>
        <authorList>
            <person name="Poole R.K."/>
            <person name="Cozens A.G."/>
            <person name="Shepherd M."/>
        </authorList>
    </citation>
    <scope>REVIEW</scope>
</reference>
<accession>P23886</accession>
<sequence length="573" mass="62920">MRALLPYLALYKRHKWMLSLGIVLAIVTLLASIGLLTLSGWFLSASAVAGVAGLYSFNYMLPAAGVRGAAITRTAGRYFERLVSHDATFRVLQHLRIYTFSKLLPLSPAGLARYRQGELLNRVVADVDTLDHLYLRVISPLVGAFVVIMVVTIGLSFLDFTLAFTLGGIMLLTLFLMPPLFYRAGKSTGQNLTHLRGQYRQQLTAWLQGQAELTIFGASDRYRTQLENTEIQWLEAQRRQSELTALSQAIMLLIGALAVILMLWMASGGVGGNAQPGALIALFVFCALAAFEALAPVTGAFQHLGQVIASAVRISDLTDQKPEVTFPDTQTRVADRVSLTLRDVQFTYPEQSQQALKGISLQVNAGEHIAILGRTGCGKSTLLQQLTRAWDPQQGEILLNDSPIASLNEAALRQTISVVPQRVHLFSATLRDNLLLASPGSSDEALSEILRRVGLEKLLEDAGLNSWLGEGGRQLSGGELRRLAIARALLHDAPLVLLDEPTEGLDATTESQILELLAEMMREKTVLMVTHRLRGLSRFQQIIVMDNGQIIEQGTHAELLARQGRYYQFKQGL</sequence>
<evidence type="ECO:0000255" key="1"/>
<evidence type="ECO:0000255" key="2">
    <source>
        <dbReference type="PROSITE-ProRule" id="PRU00434"/>
    </source>
</evidence>
<evidence type="ECO:0000255" key="3">
    <source>
        <dbReference type="PROSITE-ProRule" id="PRU00441"/>
    </source>
</evidence>
<evidence type="ECO:0000269" key="4">
    <source>
    </source>
</evidence>
<evidence type="ECO:0000269" key="5">
    <source>
    </source>
</evidence>
<evidence type="ECO:0000269" key="6">
    <source>
    </source>
</evidence>
<evidence type="ECO:0000269" key="7">
    <source>
    </source>
</evidence>
<evidence type="ECO:0000269" key="8">
    <source>
    </source>
</evidence>
<evidence type="ECO:0000269" key="9">
    <source>
    </source>
</evidence>
<evidence type="ECO:0000269" key="10">
    <source>
    </source>
</evidence>
<evidence type="ECO:0000269" key="11">
    <source>
    </source>
</evidence>
<evidence type="ECO:0000269" key="12">
    <source>
    </source>
</evidence>
<evidence type="ECO:0000269" key="13">
    <source>
    </source>
</evidence>
<evidence type="ECO:0000269" key="14">
    <source>
    </source>
</evidence>
<evidence type="ECO:0000269" key="15">
    <source>
    </source>
</evidence>
<evidence type="ECO:0000303" key="16">
    <source>
    </source>
</evidence>
<evidence type="ECO:0000303" key="17">
    <source>
    </source>
</evidence>
<evidence type="ECO:0000305" key="18"/>
<evidence type="ECO:0000305" key="19">
    <source>
    </source>
</evidence>
<evidence type="ECO:0000305" key="20">
    <source>
    </source>
</evidence>
<evidence type="ECO:0000305" key="21">
    <source>
    </source>
</evidence>
<evidence type="ECO:0007829" key="22">
    <source>
        <dbReference type="PDB" id="7ZDF"/>
    </source>
</evidence>
<evidence type="ECO:0007829" key="23">
    <source>
        <dbReference type="PDB" id="7ZDG"/>
    </source>
</evidence>
<evidence type="ECO:0007829" key="24">
    <source>
        <dbReference type="PDB" id="7ZDR"/>
    </source>
</evidence>
<evidence type="ECO:0007829" key="25">
    <source>
        <dbReference type="PDB" id="7ZDS"/>
    </source>
</evidence>
<evidence type="ECO:0007829" key="26">
    <source>
        <dbReference type="PDB" id="7ZDT"/>
    </source>
</evidence>
<evidence type="ECO:0007829" key="27">
    <source>
        <dbReference type="PDB" id="7ZE5"/>
    </source>
</evidence>